<gene>
    <name type="primary">PEX17</name>
    <name type="ordered locus">YALI0D00891g</name>
</gene>
<name>PEX17_YARLI</name>
<proteinExistence type="predicted"/>
<comment type="function">
    <text>Involved in peroxisome biosynthesis. Required for the import of a subset of matrix proteins into peroxisomes.</text>
</comment>
<comment type="subcellular location">
    <subcellularLocation>
        <location>Peroxisome membrane</location>
        <topology>Multi-pass membrane protein</topology>
    </subcellularLocation>
    <text>Probably associated with the matrix face of the membrane.</text>
</comment>
<protein>
    <recommendedName>
        <fullName>Peroxisomal membrane protein PEX17</fullName>
    </recommendedName>
    <alternativeName>
        <fullName>Peroxin-17</fullName>
    </alternativeName>
</protein>
<sequence>MNKYLVPPPQANRTVTNLDLLINNLRGSSTPGAAEVDTRDILQRIVFILPTIKNPLNLDLVIKEIINSPRLLPPLIDLHDYQQLTDAFRATIKRKALVTDPTISFEAWLETCFQVITRFAGPGWKKLPLLAGLILADYDISADGPTLERKPGFPSKLKHLLKREFVTTFDQCLSIDTRNRSDATKWVPVLACISIAQVYSLLGDVAINYRRFLQVGLDLIFSNYGLEMGTALARLHAESGGDATTAGGLIGKKLKEPVVALLNTFAHIASSCIVHVDIDYIDRIQNKIILVCENQAETWRILTIESPTVMHHQESVQYLKWELFTLCIIMQGIANMLLTQKMNQFMYLQLAYKQLQALHSIYFIVDQMGSQFAAYDYVFFSAIDVLLSEYAPYIKNRGTIPPNKEFVAERLAANLAGTSNVGSHLPIDRSRVLFALNYYEQLVTVCHDSCVETIIYPMARSFLYPTSDIQQLKPLVEAAHSVILAGLAVPTNAVVNAKLIPEYMGGVLPLFPGVFSWNQFVLAIQSIVNTVSPPSEVFKTNQKLFRLVLDSLMKKCRDTPVGIPVPHSVTVSQEQEDIPPTQRAVVMLALINSLPYVDIRSFELWLQETWNMIEATPMLAENAPNKELAHAEHEFLVLEMWKMISGNIDQRLNDVAIRWWYKKNARVHGTL</sequence>
<reference key="1">
    <citation type="journal article" date="1997" name="Mol. Cell. Biol.">
        <title>The peroxin Pex17p of the yeast Yarrowia lipolytica is associated peripherally with the peroxisomal membrane and is required for the import of a subset of matrix proteins.</title>
        <authorList>
            <person name="Smith J.J."/>
            <person name="Szilard R.K."/>
            <person name="Marelli M."/>
            <person name="Rachubinski R.A."/>
        </authorList>
    </citation>
    <scope>NUCLEOTIDE SEQUENCE [GENOMIC DNA]</scope>
    <source>
        <strain>E 122</strain>
    </source>
</reference>
<reference key="2">
    <citation type="journal article" date="2004" name="Nature">
        <title>Genome evolution in yeasts.</title>
        <authorList>
            <person name="Dujon B."/>
            <person name="Sherman D."/>
            <person name="Fischer G."/>
            <person name="Durrens P."/>
            <person name="Casaregola S."/>
            <person name="Lafontaine I."/>
            <person name="de Montigny J."/>
            <person name="Marck C."/>
            <person name="Neuveglise C."/>
            <person name="Talla E."/>
            <person name="Goffard N."/>
            <person name="Frangeul L."/>
            <person name="Aigle M."/>
            <person name="Anthouard V."/>
            <person name="Babour A."/>
            <person name="Barbe V."/>
            <person name="Barnay S."/>
            <person name="Blanchin S."/>
            <person name="Beckerich J.-M."/>
            <person name="Beyne E."/>
            <person name="Bleykasten C."/>
            <person name="Boisrame A."/>
            <person name="Boyer J."/>
            <person name="Cattolico L."/>
            <person name="Confanioleri F."/>
            <person name="de Daruvar A."/>
            <person name="Despons L."/>
            <person name="Fabre E."/>
            <person name="Fairhead C."/>
            <person name="Ferry-Dumazet H."/>
            <person name="Groppi A."/>
            <person name="Hantraye F."/>
            <person name="Hennequin C."/>
            <person name="Jauniaux N."/>
            <person name="Joyet P."/>
            <person name="Kachouri R."/>
            <person name="Kerrest A."/>
            <person name="Koszul R."/>
            <person name="Lemaire M."/>
            <person name="Lesur I."/>
            <person name="Ma L."/>
            <person name="Muller H."/>
            <person name="Nicaud J.-M."/>
            <person name="Nikolski M."/>
            <person name="Oztas S."/>
            <person name="Ozier-Kalogeropoulos O."/>
            <person name="Pellenz S."/>
            <person name="Potier S."/>
            <person name="Richard G.-F."/>
            <person name="Straub M.-L."/>
            <person name="Suleau A."/>
            <person name="Swennen D."/>
            <person name="Tekaia F."/>
            <person name="Wesolowski-Louvel M."/>
            <person name="Westhof E."/>
            <person name="Wirth B."/>
            <person name="Zeniou-Meyer M."/>
            <person name="Zivanovic Y."/>
            <person name="Bolotin-Fukuhara M."/>
            <person name="Thierry A."/>
            <person name="Bouchier C."/>
            <person name="Caudron B."/>
            <person name="Scarpelli C."/>
            <person name="Gaillardin C."/>
            <person name="Weissenbach J."/>
            <person name="Wincker P."/>
            <person name="Souciet J.-L."/>
        </authorList>
    </citation>
    <scope>NUCLEOTIDE SEQUENCE [LARGE SCALE GENOMIC DNA]</scope>
    <source>
        <strain>CLIB 122 / E 150</strain>
    </source>
</reference>
<accession>P87200</accession>
<accession>Q6CAQ1</accession>
<evidence type="ECO:0000255" key="1"/>
<evidence type="ECO:0000305" key="2"/>
<feature type="chain" id="PRO_0000058332" description="Peroxisomal membrane protein PEX17">
    <location>
        <begin position="1"/>
        <end position="671"/>
    </location>
</feature>
<feature type="transmembrane region" description="Helical" evidence="1">
    <location>
        <begin position="127"/>
        <end position="147"/>
    </location>
</feature>
<feature type="transmembrane region" description="Helical" evidence="1">
    <location>
        <begin position="187"/>
        <end position="207"/>
    </location>
</feature>
<feature type="transmembrane region" description="Helical" evidence="1">
    <location>
        <begin position="212"/>
        <end position="232"/>
    </location>
</feature>
<feature type="transmembrane region" description="Helical" evidence="1">
    <location>
        <begin position="258"/>
        <end position="278"/>
    </location>
</feature>
<feature type="transmembrane region" description="Helical" evidence="1">
    <location>
        <begin position="318"/>
        <end position="338"/>
    </location>
</feature>
<feature type="transmembrane region" description="Helical" evidence="1">
    <location>
        <begin position="372"/>
        <end position="392"/>
    </location>
</feature>
<feature type="transmembrane region" description="Helical" evidence="1">
    <location>
        <begin position="475"/>
        <end position="495"/>
    </location>
</feature>
<feature type="transmembrane region" description="Helical" evidence="1">
    <location>
        <begin position="504"/>
        <end position="524"/>
    </location>
</feature>
<feature type="sequence conflict" description="In Ref. 1; AAC49693." evidence="2" ref="1">
    <original>LL</original>
    <variation>PW</variation>
    <location>
        <begin position="71"/>
        <end position="72"/>
    </location>
</feature>
<keyword id="KW-0472">Membrane</keyword>
<keyword id="KW-0576">Peroxisome</keyword>
<keyword id="KW-0962">Peroxisome biogenesis</keyword>
<keyword id="KW-1185">Reference proteome</keyword>
<keyword id="KW-0812">Transmembrane</keyword>
<keyword id="KW-1133">Transmembrane helix</keyword>
<organism>
    <name type="scientific">Yarrowia lipolytica (strain CLIB 122 / E 150)</name>
    <name type="common">Yeast</name>
    <name type="synonym">Candida lipolytica</name>
    <dbReference type="NCBI Taxonomy" id="284591"/>
    <lineage>
        <taxon>Eukaryota</taxon>
        <taxon>Fungi</taxon>
        <taxon>Dikarya</taxon>
        <taxon>Ascomycota</taxon>
        <taxon>Saccharomycotina</taxon>
        <taxon>Dipodascomycetes</taxon>
        <taxon>Dipodascales</taxon>
        <taxon>Dipodascales incertae sedis</taxon>
        <taxon>Yarrowia</taxon>
    </lineage>
</organism>
<dbReference type="EMBL" id="U73028">
    <property type="protein sequence ID" value="AAC49693.1"/>
    <property type="molecule type" value="Genomic_DNA"/>
</dbReference>
<dbReference type="EMBL" id="CR382130">
    <property type="protein sequence ID" value="CAG80447.1"/>
    <property type="molecule type" value="Genomic_DNA"/>
</dbReference>
<dbReference type="RefSeq" id="XP_502261.1">
    <property type="nucleotide sequence ID" value="XM_502261.1"/>
</dbReference>
<dbReference type="STRING" id="284591.P87200"/>
<dbReference type="EnsemblFungi" id="CAG80447">
    <property type="protein sequence ID" value="CAG80447"/>
    <property type="gene ID" value="YALI0_D00891g"/>
</dbReference>
<dbReference type="KEGG" id="yli:2910294"/>
<dbReference type="VEuPathDB" id="FungiDB:YALI0_D00891g"/>
<dbReference type="HOGENOM" id="CLU_409510_0_0_1"/>
<dbReference type="InParanoid" id="P87200"/>
<dbReference type="OMA" id="VAIRWWY"/>
<dbReference type="OrthoDB" id="106629at4891"/>
<dbReference type="Proteomes" id="UP000001300">
    <property type="component" value="Chromosome D"/>
</dbReference>
<dbReference type="GO" id="GO:0005778">
    <property type="term" value="C:peroxisomal membrane"/>
    <property type="evidence" value="ECO:0007669"/>
    <property type="project" value="UniProtKB-SubCell"/>
</dbReference>
<dbReference type="GO" id="GO:0007031">
    <property type="term" value="P:peroxisome organization"/>
    <property type="evidence" value="ECO:0007669"/>
    <property type="project" value="UniProtKB-KW"/>
</dbReference>
<dbReference type="InterPro" id="IPR055334">
    <property type="entry name" value="PEX8-like"/>
</dbReference>
<dbReference type="PANTHER" id="PTHR39214">
    <property type="entry name" value="MICROBODY (PEROXISOME) BIOGENESIS PROTEIN PEROXIN 8 (EUROFUNG)"/>
    <property type="match status" value="1"/>
</dbReference>
<dbReference type="PANTHER" id="PTHR39214:SF1">
    <property type="entry name" value="MICROBODY (PEROXISOME) BIOGENESIS PROTEIN PEROXIN 8 (EUROFUNG)"/>
    <property type="match status" value="1"/>
</dbReference>